<feature type="chain" id="PRO_1000119886" description="ATP-dependent dethiobiotin synthetase BioD">
    <location>
        <begin position="1"/>
        <end position="226"/>
    </location>
</feature>
<feature type="active site" evidence="1">
    <location>
        <position position="38"/>
    </location>
</feature>
<feature type="binding site" evidence="1">
    <location>
        <begin position="13"/>
        <end position="18"/>
    </location>
    <ligand>
        <name>ATP</name>
        <dbReference type="ChEBI" id="CHEBI:30616"/>
    </ligand>
</feature>
<feature type="binding site" evidence="1">
    <location>
        <position position="17"/>
    </location>
    <ligand>
        <name>Mg(2+)</name>
        <dbReference type="ChEBI" id="CHEBI:18420"/>
    </ligand>
</feature>
<feature type="binding site" evidence="1">
    <location>
        <position position="55"/>
    </location>
    <ligand>
        <name>ATP</name>
        <dbReference type="ChEBI" id="CHEBI:30616"/>
    </ligand>
</feature>
<feature type="binding site" evidence="1">
    <location>
        <position position="55"/>
    </location>
    <ligand>
        <name>Mg(2+)</name>
        <dbReference type="ChEBI" id="CHEBI:18420"/>
    </ligand>
</feature>
<feature type="binding site" evidence="1">
    <location>
        <begin position="116"/>
        <end position="119"/>
    </location>
    <ligand>
        <name>ATP</name>
        <dbReference type="ChEBI" id="CHEBI:30616"/>
    </ligand>
</feature>
<feature type="binding site" evidence="1">
    <location>
        <position position="116"/>
    </location>
    <ligand>
        <name>Mg(2+)</name>
        <dbReference type="ChEBI" id="CHEBI:18420"/>
    </ligand>
</feature>
<feature type="binding site" evidence="1">
    <location>
        <begin position="176"/>
        <end position="177"/>
    </location>
    <ligand>
        <name>ATP</name>
        <dbReference type="ChEBI" id="CHEBI:30616"/>
    </ligand>
</feature>
<name>BIOD_ALIFM</name>
<protein>
    <recommendedName>
        <fullName evidence="1">ATP-dependent dethiobiotin synthetase BioD</fullName>
        <ecNumber evidence="1">6.3.3.3</ecNumber>
    </recommendedName>
    <alternativeName>
        <fullName evidence="1">DTB synthetase</fullName>
        <shortName evidence="1">DTBS</shortName>
    </alternativeName>
    <alternativeName>
        <fullName evidence="1">Dethiobiotin synthase</fullName>
    </alternativeName>
</protein>
<reference key="1">
    <citation type="submission" date="2008-08" db="EMBL/GenBank/DDBJ databases">
        <title>Complete sequence of Vibrio fischeri strain MJ11.</title>
        <authorList>
            <person name="Mandel M.J."/>
            <person name="Stabb E.V."/>
            <person name="Ruby E.G."/>
            <person name="Ferriera S."/>
            <person name="Johnson J."/>
            <person name="Kravitz S."/>
            <person name="Beeson K."/>
            <person name="Sutton G."/>
            <person name="Rogers Y.-H."/>
            <person name="Friedman R."/>
            <person name="Frazier M."/>
            <person name="Venter J.C."/>
        </authorList>
    </citation>
    <scope>NUCLEOTIDE SEQUENCE [LARGE SCALE GENOMIC DNA]</scope>
    <source>
        <strain>MJ11</strain>
    </source>
</reference>
<comment type="function">
    <text evidence="1">Catalyzes a mechanistically unusual reaction, the ATP-dependent insertion of CO2 between the N7 and N8 nitrogen atoms of 7,8-diaminopelargonic acid (DAPA, also called 7,8-diammoniononanoate) to form a ureido ring.</text>
</comment>
<comment type="catalytic activity">
    <reaction evidence="1">
        <text>(7R,8S)-7,8-diammoniononanoate + CO2 + ATP = (4R,5S)-dethiobiotin + ADP + phosphate + 3 H(+)</text>
        <dbReference type="Rhea" id="RHEA:15805"/>
        <dbReference type="ChEBI" id="CHEBI:15378"/>
        <dbReference type="ChEBI" id="CHEBI:16526"/>
        <dbReference type="ChEBI" id="CHEBI:30616"/>
        <dbReference type="ChEBI" id="CHEBI:43474"/>
        <dbReference type="ChEBI" id="CHEBI:149469"/>
        <dbReference type="ChEBI" id="CHEBI:149473"/>
        <dbReference type="ChEBI" id="CHEBI:456216"/>
        <dbReference type="EC" id="6.3.3.3"/>
    </reaction>
</comment>
<comment type="cofactor">
    <cofactor evidence="1">
        <name>Mg(2+)</name>
        <dbReference type="ChEBI" id="CHEBI:18420"/>
    </cofactor>
</comment>
<comment type="pathway">
    <text evidence="1">Cofactor biosynthesis; biotin biosynthesis; biotin from 7,8-diaminononanoate: step 1/2.</text>
</comment>
<comment type="subunit">
    <text evidence="1">Homodimer.</text>
</comment>
<comment type="subcellular location">
    <subcellularLocation>
        <location evidence="1">Cytoplasm</location>
    </subcellularLocation>
</comment>
<comment type="similarity">
    <text evidence="1">Belongs to the dethiobiotin synthetase family.</text>
</comment>
<dbReference type="EC" id="6.3.3.3" evidence="1"/>
<dbReference type="EMBL" id="CP001133">
    <property type="protein sequence ID" value="ACH64557.1"/>
    <property type="molecule type" value="Genomic_DNA"/>
</dbReference>
<dbReference type="RefSeq" id="WP_005423112.1">
    <property type="nucleotide sequence ID" value="NC_011186.1"/>
</dbReference>
<dbReference type="SMR" id="B5EUP7"/>
<dbReference type="GeneID" id="54166064"/>
<dbReference type="KEGG" id="vfm:VFMJ11_A0867"/>
<dbReference type="HOGENOM" id="CLU_072551_0_0_6"/>
<dbReference type="UniPathway" id="UPA00078">
    <property type="reaction ID" value="UER00161"/>
</dbReference>
<dbReference type="Proteomes" id="UP000001857">
    <property type="component" value="Chromosome II"/>
</dbReference>
<dbReference type="GO" id="GO:0005829">
    <property type="term" value="C:cytosol"/>
    <property type="evidence" value="ECO:0007669"/>
    <property type="project" value="TreeGrafter"/>
</dbReference>
<dbReference type="GO" id="GO:0005524">
    <property type="term" value="F:ATP binding"/>
    <property type="evidence" value="ECO:0007669"/>
    <property type="project" value="UniProtKB-UniRule"/>
</dbReference>
<dbReference type="GO" id="GO:0004141">
    <property type="term" value="F:dethiobiotin synthase activity"/>
    <property type="evidence" value="ECO:0007669"/>
    <property type="project" value="UniProtKB-UniRule"/>
</dbReference>
<dbReference type="GO" id="GO:0000287">
    <property type="term" value="F:magnesium ion binding"/>
    <property type="evidence" value="ECO:0007669"/>
    <property type="project" value="UniProtKB-UniRule"/>
</dbReference>
<dbReference type="GO" id="GO:0009102">
    <property type="term" value="P:biotin biosynthetic process"/>
    <property type="evidence" value="ECO:0007669"/>
    <property type="project" value="UniProtKB-UniRule"/>
</dbReference>
<dbReference type="CDD" id="cd03109">
    <property type="entry name" value="DTBS"/>
    <property type="match status" value="1"/>
</dbReference>
<dbReference type="FunFam" id="3.40.50.300:FF:000292">
    <property type="entry name" value="ATP-dependent dethiobiotin synthetase BioD"/>
    <property type="match status" value="1"/>
</dbReference>
<dbReference type="Gene3D" id="3.40.50.300">
    <property type="entry name" value="P-loop containing nucleotide triphosphate hydrolases"/>
    <property type="match status" value="1"/>
</dbReference>
<dbReference type="HAMAP" id="MF_00336">
    <property type="entry name" value="BioD"/>
    <property type="match status" value="1"/>
</dbReference>
<dbReference type="InterPro" id="IPR004472">
    <property type="entry name" value="DTB_synth_BioD"/>
</dbReference>
<dbReference type="InterPro" id="IPR027417">
    <property type="entry name" value="P-loop_NTPase"/>
</dbReference>
<dbReference type="NCBIfam" id="TIGR00347">
    <property type="entry name" value="bioD"/>
    <property type="match status" value="1"/>
</dbReference>
<dbReference type="PANTHER" id="PTHR43210">
    <property type="entry name" value="DETHIOBIOTIN SYNTHETASE"/>
    <property type="match status" value="1"/>
</dbReference>
<dbReference type="PANTHER" id="PTHR43210:SF5">
    <property type="entry name" value="DETHIOBIOTIN SYNTHETASE"/>
    <property type="match status" value="1"/>
</dbReference>
<dbReference type="Pfam" id="PF13500">
    <property type="entry name" value="AAA_26"/>
    <property type="match status" value="1"/>
</dbReference>
<dbReference type="PIRSF" id="PIRSF006755">
    <property type="entry name" value="DTB_synth"/>
    <property type="match status" value="1"/>
</dbReference>
<dbReference type="SUPFAM" id="SSF52540">
    <property type="entry name" value="P-loop containing nucleoside triphosphate hydrolases"/>
    <property type="match status" value="1"/>
</dbReference>
<accession>B5EUP7</accession>
<keyword id="KW-0067">ATP-binding</keyword>
<keyword id="KW-0093">Biotin biosynthesis</keyword>
<keyword id="KW-0963">Cytoplasm</keyword>
<keyword id="KW-0436">Ligase</keyword>
<keyword id="KW-0460">Magnesium</keyword>
<keyword id="KW-0479">Metal-binding</keyword>
<keyword id="KW-0547">Nucleotide-binding</keyword>
<gene>
    <name evidence="1" type="primary">bioD</name>
    <name type="ordered locus">VFMJ11_A0867</name>
</gene>
<evidence type="ECO:0000255" key="1">
    <source>
        <dbReference type="HAMAP-Rule" id="MF_00336"/>
    </source>
</evidence>
<proteinExistence type="inferred from homology"/>
<organism>
    <name type="scientific">Aliivibrio fischeri (strain MJ11)</name>
    <name type="common">Vibrio fischeri</name>
    <dbReference type="NCBI Taxonomy" id="388396"/>
    <lineage>
        <taxon>Bacteria</taxon>
        <taxon>Pseudomonadati</taxon>
        <taxon>Pseudomonadota</taxon>
        <taxon>Gammaproteobacteria</taxon>
        <taxon>Vibrionales</taxon>
        <taxon>Vibrionaceae</taxon>
        <taxon>Aliivibrio</taxon>
    </lineage>
</organism>
<sequence>MIDAFFIAGTDTDVGKTVASKAILDALNMKGLRTAAYKPVAAGSEDKGEGVQNSDAIHLRAVANVELRYEEVNPYALLMPASPHIAAEAENVVIDYSVLSEGLASLKEKSDVVLVEGAGGWRVPVSKDDCLSTWVQQEKLPVVLVVGIKLGCLSHAMLTAEAIQHDGLEIIGWVANRVNPGTENYAEIIKMLEDKMPAPKLGEIPYMPSVKRKNMGKYIHLEALDN</sequence>